<protein>
    <recommendedName>
        <fullName evidence="1">Small ribosomal subunit protein uS9</fullName>
    </recommendedName>
    <alternativeName>
        <fullName evidence="2">30S ribosomal protein S9</fullName>
    </alternativeName>
</protein>
<keyword id="KW-1185">Reference proteome</keyword>
<keyword id="KW-0687">Ribonucleoprotein</keyword>
<keyword id="KW-0689">Ribosomal protein</keyword>
<feature type="chain" id="PRO_1000051222" description="Small ribosomal subunit protein uS9">
    <location>
        <begin position="1"/>
        <end position="130"/>
    </location>
</feature>
<gene>
    <name evidence="1" type="primary">rpsI</name>
    <name type="ordered locus">ECA0307</name>
</gene>
<evidence type="ECO:0000255" key="1">
    <source>
        <dbReference type="HAMAP-Rule" id="MF_00532"/>
    </source>
</evidence>
<evidence type="ECO:0000305" key="2"/>
<reference key="1">
    <citation type="journal article" date="2004" name="Proc. Natl. Acad. Sci. U.S.A.">
        <title>Genome sequence of the enterobacterial phytopathogen Erwinia carotovora subsp. atroseptica and characterization of virulence factors.</title>
        <authorList>
            <person name="Bell K.S."/>
            <person name="Sebaihia M."/>
            <person name="Pritchard L."/>
            <person name="Holden M.T.G."/>
            <person name="Hyman L.J."/>
            <person name="Holeva M.C."/>
            <person name="Thomson N.R."/>
            <person name="Bentley S.D."/>
            <person name="Churcher L.J.C."/>
            <person name="Mungall K."/>
            <person name="Atkin R."/>
            <person name="Bason N."/>
            <person name="Brooks K."/>
            <person name="Chillingworth T."/>
            <person name="Clark K."/>
            <person name="Doggett J."/>
            <person name="Fraser A."/>
            <person name="Hance Z."/>
            <person name="Hauser H."/>
            <person name="Jagels K."/>
            <person name="Moule S."/>
            <person name="Norbertczak H."/>
            <person name="Ormond D."/>
            <person name="Price C."/>
            <person name="Quail M.A."/>
            <person name="Sanders M."/>
            <person name="Walker D."/>
            <person name="Whitehead S."/>
            <person name="Salmond G.P.C."/>
            <person name="Birch P.R.J."/>
            <person name="Parkhill J."/>
            <person name="Toth I.K."/>
        </authorList>
    </citation>
    <scope>NUCLEOTIDE SEQUENCE [LARGE SCALE GENOMIC DNA]</scope>
    <source>
        <strain>SCRI 1043 / ATCC BAA-672</strain>
    </source>
</reference>
<organism>
    <name type="scientific">Pectobacterium atrosepticum (strain SCRI 1043 / ATCC BAA-672)</name>
    <name type="common">Erwinia carotovora subsp. atroseptica</name>
    <dbReference type="NCBI Taxonomy" id="218491"/>
    <lineage>
        <taxon>Bacteria</taxon>
        <taxon>Pseudomonadati</taxon>
        <taxon>Pseudomonadota</taxon>
        <taxon>Gammaproteobacteria</taxon>
        <taxon>Enterobacterales</taxon>
        <taxon>Pectobacteriaceae</taxon>
        <taxon>Pectobacterium</taxon>
    </lineage>
</organism>
<comment type="similarity">
    <text evidence="1">Belongs to the universal ribosomal protein uS9 family.</text>
</comment>
<proteinExistence type="inferred from homology"/>
<accession>Q6DAE6</accession>
<dbReference type="EMBL" id="BX950851">
    <property type="protein sequence ID" value="CAG73227.1"/>
    <property type="molecule type" value="Genomic_DNA"/>
</dbReference>
<dbReference type="RefSeq" id="WP_011091939.1">
    <property type="nucleotide sequence ID" value="NC_004547.2"/>
</dbReference>
<dbReference type="SMR" id="Q6DAE6"/>
<dbReference type="STRING" id="218491.ECA0307"/>
<dbReference type="GeneID" id="57207180"/>
<dbReference type="KEGG" id="eca:ECA0307"/>
<dbReference type="eggNOG" id="COG0103">
    <property type="taxonomic scope" value="Bacteria"/>
</dbReference>
<dbReference type="HOGENOM" id="CLU_046483_2_1_6"/>
<dbReference type="OrthoDB" id="9803965at2"/>
<dbReference type="Proteomes" id="UP000007966">
    <property type="component" value="Chromosome"/>
</dbReference>
<dbReference type="GO" id="GO:0022627">
    <property type="term" value="C:cytosolic small ribosomal subunit"/>
    <property type="evidence" value="ECO:0007669"/>
    <property type="project" value="TreeGrafter"/>
</dbReference>
<dbReference type="GO" id="GO:0003723">
    <property type="term" value="F:RNA binding"/>
    <property type="evidence" value="ECO:0007669"/>
    <property type="project" value="TreeGrafter"/>
</dbReference>
<dbReference type="GO" id="GO:0003735">
    <property type="term" value="F:structural constituent of ribosome"/>
    <property type="evidence" value="ECO:0007669"/>
    <property type="project" value="InterPro"/>
</dbReference>
<dbReference type="GO" id="GO:0006412">
    <property type="term" value="P:translation"/>
    <property type="evidence" value="ECO:0007669"/>
    <property type="project" value="UniProtKB-UniRule"/>
</dbReference>
<dbReference type="FunFam" id="3.30.230.10:FF:000001">
    <property type="entry name" value="30S ribosomal protein S9"/>
    <property type="match status" value="1"/>
</dbReference>
<dbReference type="Gene3D" id="3.30.230.10">
    <property type="match status" value="1"/>
</dbReference>
<dbReference type="HAMAP" id="MF_00532_B">
    <property type="entry name" value="Ribosomal_uS9_B"/>
    <property type="match status" value="1"/>
</dbReference>
<dbReference type="InterPro" id="IPR020568">
    <property type="entry name" value="Ribosomal_Su5_D2-typ_SF"/>
</dbReference>
<dbReference type="InterPro" id="IPR000754">
    <property type="entry name" value="Ribosomal_uS9"/>
</dbReference>
<dbReference type="InterPro" id="IPR023035">
    <property type="entry name" value="Ribosomal_uS9_bac/plastid"/>
</dbReference>
<dbReference type="InterPro" id="IPR020574">
    <property type="entry name" value="Ribosomal_uS9_CS"/>
</dbReference>
<dbReference type="InterPro" id="IPR014721">
    <property type="entry name" value="Ribsml_uS5_D2-typ_fold_subgr"/>
</dbReference>
<dbReference type="NCBIfam" id="NF001099">
    <property type="entry name" value="PRK00132.1"/>
    <property type="match status" value="1"/>
</dbReference>
<dbReference type="PANTHER" id="PTHR21569">
    <property type="entry name" value="RIBOSOMAL PROTEIN S9"/>
    <property type="match status" value="1"/>
</dbReference>
<dbReference type="PANTHER" id="PTHR21569:SF1">
    <property type="entry name" value="SMALL RIBOSOMAL SUBUNIT PROTEIN US9M"/>
    <property type="match status" value="1"/>
</dbReference>
<dbReference type="Pfam" id="PF00380">
    <property type="entry name" value="Ribosomal_S9"/>
    <property type="match status" value="1"/>
</dbReference>
<dbReference type="SUPFAM" id="SSF54211">
    <property type="entry name" value="Ribosomal protein S5 domain 2-like"/>
    <property type="match status" value="1"/>
</dbReference>
<dbReference type="PROSITE" id="PS00360">
    <property type="entry name" value="RIBOSOMAL_S9"/>
    <property type="match status" value="1"/>
</dbReference>
<name>RS9_PECAS</name>
<sequence length="130" mass="14747">MAENQYYGTGRRKSSAARVFIKPGSGNIVINQRSLEQYFGRETARMVVRQPLELVDMVGKFDLYITVKGGGISGQAGAIRHGITRALMEYDESLRGELRKAGFVTRDARQVERKKVGLRKARRRPQFSKR</sequence>